<feature type="chain" id="PRO_0000161663" description="Basic phospholipase A2 1">
    <location>
        <begin position="1"/>
        <end position="118"/>
    </location>
</feature>
<feature type="active site" evidence="1">
    <location>
        <position position="47"/>
    </location>
</feature>
<feature type="active site" evidence="1">
    <location>
        <position position="92"/>
    </location>
</feature>
<feature type="binding site" evidence="1">
    <location>
        <position position="27"/>
    </location>
    <ligand>
        <name>Ca(2+)</name>
        <dbReference type="ChEBI" id="CHEBI:29108"/>
    </ligand>
</feature>
<feature type="binding site" evidence="1">
    <location>
        <position position="29"/>
    </location>
    <ligand>
        <name>Ca(2+)</name>
        <dbReference type="ChEBI" id="CHEBI:29108"/>
    </ligand>
</feature>
<feature type="binding site" evidence="1">
    <location>
        <position position="31"/>
    </location>
    <ligand>
        <name>Ca(2+)</name>
        <dbReference type="ChEBI" id="CHEBI:29108"/>
    </ligand>
</feature>
<feature type="binding site" evidence="1">
    <location>
        <position position="48"/>
    </location>
    <ligand>
        <name>Ca(2+)</name>
        <dbReference type="ChEBI" id="CHEBI:29108"/>
    </ligand>
</feature>
<feature type="disulfide bond" evidence="1">
    <location>
        <begin position="11"/>
        <end position="72"/>
    </location>
</feature>
<feature type="disulfide bond" evidence="1">
    <location>
        <begin position="26"/>
        <end position="117"/>
    </location>
</feature>
<feature type="disulfide bond" evidence="1">
    <location>
        <begin position="28"/>
        <end position="44"/>
    </location>
</feature>
<feature type="disulfide bond" evidence="1">
    <location>
        <begin position="43"/>
        <end position="98"/>
    </location>
</feature>
<feature type="disulfide bond" evidence="1">
    <location>
        <begin position="50"/>
        <end position="91"/>
    </location>
</feature>
<feature type="disulfide bond" evidence="1">
    <location>
        <begin position="60"/>
        <end position="84"/>
    </location>
</feature>
<feature type="disulfide bond" evidence="1">
    <location>
        <begin position="78"/>
        <end position="89"/>
    </location>
</feature>
<sequence length="118" mass="13473">NLYQFKNMIHCTVPNRPWWHFANYGCYCGRGGKGTPVDDLDRCCQIHDKCYDEAEKISGCWPYIKTYTYESCQGTLTCKDGGKCAASVCDCDRVAANCFARATYNDKNYNIDFNARCQ</sequence>
<accession>P00599</accession>
<evidence type="ECO:0000250" key="1"/>
<evidence type="ECO:0000255" key="2">
    <source>
        <dbReference type="PROSITE-ProRule" id="PRU10035"/>
    </source>
</evidence>
<evidence type="ECO:0000255" key="3">
    <source>
        <dbReference type="PROSITE-ProRule" id="PRU10036"/>
    </source>
</evidence>
<evidence type="ECO:0000305" key="4"/>
<reference key="1">
    <citation type="journal article" date="1975" name="Biochim. Biophys. Acta">
        <title>The amino acid sequence of phospholipase A, fractions DE-I and DE-II.</title>
        <authorList>
            <person name="Joubert F.J."/>
        </authorList>
    </citation>
    <scope>PROTEIN SEQUENCE</scope>
    <source>
        <tissue>Venom</tissue>
    </source>
</reference>
<reference key="2">
    <citation type="journal article" date="1975" name="Biochim. Biophys. Acta">
        <title>Naja melanoleuca (forest cobra) venom. Purification and some properties of phospholipases A.</title>
        <authorList>
            <person name="Joubert F.J."/>
            <person name="van der Walt S.J."/>
        </authorList>
    </citation>
    <scope>DISULFIDE BONDS</scope>
</reference>
<comment type="function">
    <text>PLA2 catalyzes the calcium-dependent hydrolysis of the 2-acyl groups in 3-sn-phosphoglycerides.</text>
</comment>
<comment type="catalytic activity">
    <reaction evidence="2 3">
        <text>a 1,2-diacyl-sn-glycero-3-phosphocholine + H2O = a 1-acyl-sn-glycero-3-phosphocholine + a fatty acid + H(+)</text>
        <dbReference type="Rhea" id="RHEA:15801"/>
        <dbReference type="ChEBI" id="CHEBI:15377"/>
        <dbReference type="ChEBI" id="CHEBI:15378"/>
        <dbReference type="ChEBI" id="CHEBI:28868"/>
        <dbReference type="ChEBI" id="CHEBI:57643"/>
        <dbReference type="ChEBI" id="CHEBI:58168"/>
        <dbReference type="EC" id="3.1.1.4"/>
    </reaction>
</comment>
<comment type="cofactor">
    <cofactor evidence="1">
        <name>Ca(2+)</name>
        <dbReference type="ChEBI" id="CHEBI:29108"/>
    </cofactor>
    <text evidence="1">Binds 1 Ca(2+) ion.</text>
</comment>
<comment type="subcellular location">
    <subcellularLocation>
        <location>Secreted</location>
    </subcellularLocation>
</comment>
<comment type="tissue specificity">
    <text>Expressed by the venom gland.</text>
</comment>
<comment type="similarity">
    <text evidence="4">Belongs to the phospholipase A2 family. Group I subfamily. D49 sub-subfamily.</text>
</comment>
<name>PA2B1_NAJME</name>
<organism>
    <name type="scientific">Naja melanoleuca</name>
    <name type="common">Forest cobra</name>
    <name type="synonym">Black-lipped cobra</name>
    <dbReference type="NCBI Taxonomy" id="8643"/>
    <lineage>
        <taxon>Eukaryota</taxon>
        <taxon>Metazoa</taxon>
        <taxon>Chordata</taxon>
        <taxon>Craniata</taxon>
        <taxon>Vertebrata</taxon>
        <taxon>Euteleostomi</taxon>
        <taxon>Lepidosauria</taxon>
        <taxon>Squamata</taxon>
        <taxon>Bifurcata</taxon>
        <taxon>Unidentata</taxon>
        <taxon>Episquamata</taxon>
        <taxon>Toxicofera</taxon>
        <taxon>Serpentes</taxon>
        <taxon>Colubroidea</taxon>
        <taxon>Elapidae</taxon>
        <taxon>Elapinae</taxon>
        <taxon>Naja</taxon>
    </lineage>
</organism>
<dbReference type="EC" id="3.1.1.4"/>
<dbReference type="PIR" id="A00741">
    <property type="entry name" value="PSNJ1W"/>
</dbReference>
<dbReference type="SMR" id="P00599"/>
<dbReference type="BindingDB" id="P00599"/>
<dbReference type="ChEMBL" id="CHEMBL3967"/>
<dbReference type="GO" id="GO:0005576">
    <property type="term" value="C:extracellular region"/>
    <property type="evidence" value="ECO:0007669"/>
    <property type="project" value="UniProtKB-SubCell"/>
</dbReference>
<dbReference type="GO" id="GO:0005509">
    <property type="term" value="F:calcium ion binding"/>
    <property type="evidence" value="ECO:0007669"/>
    <property type="project" value="InterPro"/>
</dbReference>
<dbReference type="GO" id="GO:0047498">
    <property type="term" value="F:calcium-dependent phospholipase A2 activity"/>
    <property type="evidence" value="ECO:0007669"/>
    <property type="project" value="TreeGrafter"/>
</dbReference>
<dbReference type="GO" id="GO:0005543">
    <property type="term" value="F:phospholipid binding"/>
    <property type="evidence" value="ECO:0007669"/>
    <property type="project" value="TreeGrafter"/>
</dbReference>
<dbReference type="GO" id="GO:0050482">
    <property type="term" value="P:arachidonate secretion"/>
    <property type="evidence" value="ECO:0007669"/>
    <property type="project" value="InterPro"/>
</dbReference>
<dbReference type="GO" id="GO:0016042">
    <property type="term" value="P:lipid catabolic process"/>
    <property type="evidence" value="ECO:0007669"/>
    <property type="project" value="UniProtKB-KW"/>
</dbReference>
<dbReference type="GO" id="GO:0006644">
    <property type="term" value="P:phospholipid metabolic process"/>
    <property type="evidence" value="ECO:0007669"/>
    <property type="project" value="InterPro"/>
</dbReference>
<dbReference type="CDD" id="cd00125">
    <property type="entry name" value="PLA2c"/>
    <property type="match status" value="1"/>
</dbReference>
<dbReference type="FunFam" id="1.20.90.10:FF:000007">
    <property type="entry name" value="Acidic phospholipase A2"/>
    <property type="match status" value="1"/>
</dbReference>
<dbReference type="Gene3D" id="1.20.90.10">
    <property type="entry name" value="Phospholipase A2 domain"/>
    <property type="match status" value="1"/>
</dbReference>
<dbReference type="InterPro" id="IPR001211">
    <property type="entry name" value="PLipase_A2"/>
</dbReference>
<dbReference type="InterPro" id="IPR033112">
    <property type="entry name" value="PLipase_A2_Asp_AS"/>
</dbReference>
<dbReference type="InterPro" id="IPR016090">
    <property type="entry name" value="PLipase_A2_dom"/>
</dbReference>
<dbReference type="InterPro" id="IPR036444">
    <property type="entry name" value="PLipase_A2_dom_sf"/>
</dbReference>
<dbReference type="InterPro" id="IPR033113">
    <property type="entry name" value="PLipase_A2_His_AS"/>
</dbReference>
<dbReference type="PANTHER" id="PTHR11716:SF100">
    <property type="entry name" value="PHOSPHOLIPASE A2"/>
    <property type="match status" value="1"/>
</dbReference>
<dbReference type="PANTHER" id="PTHR11716">
    <property type="entry name" value="PHOSPHOLIPASE A2 FAMILY MEMBER"/>
    <property type="match status" value="1"/>
</dbReference>
<dbReference type="Pfam" id="PF00068">
    <property type="entry name" value="Phospholip_A2_1"/>
    <property type="match status" value="1"/>
</dbReference>
<dbReference type="PRINTS" id="PR00389">
    <property type="entry name" value="PHPHLIPASEA2"/>
</dbReference>
<dbReference type="SMART" id="SM00085">
    <property type="entry name" value="PA2c"/>
    <property type="match status" value="1"/>
</dbReference>
<dbReference type="SUPFAM" id="SSF48619">
    <property type="entry name" value="Phospholipase A2, PLA2"/>
    <property type="match status" value="1"/>
</dbReference>
<dbReference type="PROSITE" id="PS00119">
    <property type="entry name" value="PA2_ASP"/>
    <property type="match status" value="1"/>
</dbReference>
<dbReference type="PROSITE" id="PS00118">
    <property type="entry name" value="PA2_HIS"/>
    <property type="match status" value="1"/>
</dbReference>
<protein>
    <recommendedName>
        <fullName>Basic phospholipase A2 1</fullName>
        <shortName>svPLA2</shortName>
        <ecNumber>3.1.1.4</ecNumber>
    </recommendedName>
    <alternativeName>
        <fullName>DE-I</fullName>
    </alternativeName>
    <alternativeName>
        <fullName>Phosphatidylcholine 2-acylhydrolase</fullName>
    </alternativeName>
</protein>
<proteinExistence type="evidence at protein level"/>
<keyword id="KW-0106">Calcium</keyword>
<keyword id="KW-0903">Direct protein sequencing</keyword>
<keyword id="KW-1015">Disulfide bond</keyword>
<keyword id="KW-0378">Hydrolase</keyword>
<keyword id="KW-0442">Lipid degradation</keyword>
<keyword id="KW-0443">Lipid metabolism</keyword>
<keyword id="KW-0479">Metal-binding</keyword>
<keyword id="KW-0964">Secreted</keyword>